<reference key="1">
    <citation type="journal article" date="1993" name="Plant Mol. Biol.">
        <title>Comparative analysis of chromosomal HMG proteins from monocotyledons and dicotyledons.</title>
        <authorList>
            <person name="Grasser K."/>
            <person name="Wohlfarth T."/>
            <person name="Baeumlein H."/>
            <person name="Feix G."/>
        </authorList>
    </citation>
    <scope>NUCLEOTIDE SEQUENCE [MRNA]</scope>
    <source>
        <strain>cv. Minor</strain>
        <tissue>Cotyledon</tissue>
    </source>
</reference>
<dbReference type="EMBL" id="Z21703">
    <property type="protein sequence ID" value="CAB37859.1"/>
    <property type="molecule type" value="mRNA"/>
</dbReference>
<dbReference type="PIR" id="S39556">
    <property type="entry name" value="S39556"/>
</dbReference>
<dbReference type="SMR" id="P40620"/>
<dbReference type="GO" id="GO:0000785">
    <property type="term" value="C:chromatin"/>
    <property type="evidence" value="ECO:0007669"/>
    <property type="project" value="UniProtKB-ARBA"/>
</dbReference>
<dbReference type="GO" id="GO:0005634">
    <property type="term" value="C:nucleus"/>
    <property type="evidence" value="ECO:0007669"/>
    <property type="project" value="UniProtKB-SubCell"/>
</dbReference>
<dbReference type="GO" id="GO:0003682">
    <property type="term" value="F:chromatin binding"/>
    <property type="evidence" value="ECO:0007669"/>
    <property type="project" value="UniProtKB-ARBA"/>
</dbReference>
<dbReference type="GO" id="GO:0003677">
    <property type="term" value="F:DNA binding"/>
    <property type="evidence" value="ECO:0007669"/>
    <property type="project" value="UniProtKB-KW"/>
</dbReference>
<dbReference type="GO" id="GO:0030527">
    <property type="term" value="F:structural constituent of chromatin"/>
    <property type="evidence" value="ECO:0007669"/>
    <property type="project" value="UniProtKB-ARBA"/>
</dbReference>
<dbReference type="GO" id="GO:0006325">
    <property type="term" value="P:chromatin organization"/>
    <property type="evidence" value="ECO:0007669"/>
    <property type="project" value="UniProtKB-ARBA"/>
</dbReference>
<dbReference type="CDD" id="cd22005">
    <property type="entry name" value="HMG-box_AtHMGB1-like"/>
    <property type="match status" value="1"/>
</dbReference>
<dbReference type="Gene3D" id="1.10.30.10">
    <property type="entry name" value="High mobility group box domain"/>
    <property type="match status" value="1"/>
</dbReference>
<dbReference type="InterPro" id="IPR009071">
    <property type="entry name" value="HMG_box_dom"/>
</dbReference>
<dbReference type="InterPro" id="IPR036910">
    <property type="entry name" value="HMG_box_dom_sf"/>
</dbReference>
<dbReference type="InterPro" id="IPR031061">
    <property type="entry name" value="HMGB_plant"/>
</dbReference>
<dbReference type="PANTHER" id="PTHR46261:SF18">
    <property type="entry name" value="DNA-BINDING PROTEIN MNB1B"/>
    <property type="match status" value="1"/>
</dbReference>
<dbReference type="PANTHER" id="PTHR46261">
    <property type="entry name" value="HIGH MOBILITY GROUP B PROTEIN 4-RELATED"/>
    <property type="match status" value="1"/>
</dbReference>
<dbReference type="Pfam" id="PF00505">
    <property type="entry name" value="HMG_box"/>
    <property type="match status" value="1"/>
</dbReference>
<dbReference type="SMART" id="SM00398">
    <property type="entry name" value="HMG"/>
    <property type="match status" value="1"/>
</dbReference>
<dbReference type="SUPFAM" id="SSF47095">
    <property type="entry name" value="HMG-box"/>
    <property type="match status" value="1"/>
</dbReference>
<dbReference type="PROSITE" id="PS50118">
    <property type="entry name" value="HMG_BOX_2"/>
    <property type="match status" value="1"/>
</dbReference>
<feature type="chain" id="PRO_0000048556" description="HMG1/2-like protein">
    <location>
        <begin position="1"/>
        <end position="149"/>
    </location>
</feature>
<feature type="DNA-binding region" description="HMG box" evidence="1">
    <location>
        <begin position="45"/>
        <end position="114"/>
    </location>
</feature>
<feature type="region of interest" description="Disordered" evidence="2">
    <location>
        <begin position="1"/>
        <end position="52"/>
    </location>
</feature>
<feature type="region of interest" description="Disordered" evidence="2">
    <location>
        <begin position="112"/>
        <end position="149"/>
    </location>
</feature>
<feature type="compositionally biased region" description="Basic and acidic residues" evidence="2">
    <location>
        <begin position="1"/>
        <end position="15"/>
    </location>
</feature>
<feature type="compositionally biased region" description="Basic and acidic residues" evidence="2">
    <location>
        <begin position="35"/>
        <end position="44"/>
    </location>
</feature>
<feature type="compositionally biased region" description="Acidic residues" evidence="2">
    <location>
        <begin position="134"/>
        <end position="149"/>
    </location>
</feature>
<sequence length="149" mass="16659">MKGGKSKGESKKAETKLAVNKKGAAATKGGKKPAKGKEPKDPNKPKRPPSAFFVFMADFREQYKKDHPNNKSVAAVGKACGEEWKSLSEEEKAPYVDRALKKKEEYEITLQAYNKKLEGKDDEEGSDKSKSEVNDEDEDEEDEEDEDDD</sequence>
<accession>P40620</accession>
<comment type="subcellular location">
    <subcellularLocation>
        <location evidence="1">Nucleus</location>
    </subcellularLocation>
</comment>
<comment type="similarity">
    <text evidence="3">Belongs to the HMGB family.</text>
</comment>
<keyword id="KW-0238">DNA-binding</keyword>
<keyword id="KW-0539">Nucleus</keyword>
<organism>
    <name type="scientific">Vicia faba</name>
    <name type="common">Broad bean</name>
    <name type="synonym">Faba vulgaris</name>
    <dbReference type="NCBI Taxonomy" id="3906"/>
    <lineage>
        <taxon>Eukaryota</taxon>
        <taxon>Viridiplantae</taxon>
        <taxon>Streptophyta</taxon>
        <taxon>Embryophyta</taxon>
        <taxon>Tracheophyta</taxon>
        <taxon>Spermatophyta</taxon>
        <taxon>Magnoliopsida</taxon>
        <taxon>eudicotyledons</taxon>
        <taxon>Gunneridae</taxon>
        <taxon>Pentapetalae</taxon>
        <taxon>rosids</taxon>
        <taxon>fabids</taxon>
        <taxon>Fabales</taxon>
        <taxon>Fabaceae</taxon>
        <taxon>Papilionoideae</taxon>
        <taxon>50 kb inversion clade</taxon>
        <taxon>NPAAA clade</taxon>
        <taxon>Hologalegina</taxon>
        <taxon>IRL clade</taxon>
        <taxon>Fabeae</taxon>
        <taxon>Vicia</taxon>
    </lineage>
</organism>
<proteinExistence type="evidence at transcript level"/>
<protein>
    <recommendedName>
        <fullName>HMG1/2-like protein</fullName>
    </recommendedName>
</protein>
<evidence type="ECO:0000255" key="1">
    <source>
        <dbReference type="PROSITE-ProRule" id="PRU00267"/>
    </source>
</evidence>
<evidence type="ECO:0000256" key="2">
    <source>
        <dbReference type="SAM" id="MobiDB-lite"/>
    </source>
</evidence>
<evidence type="ECO:0000305" key="3"/>
<name>HMGL_VICFA</name>